<protein>
    <recommendedName>
        <fullName evidence="1">2,3-diketo-L-gulonate reductase</fullName>
        <shortName evidence="1">2,3-DKG reductase</shortName>
        <ecNumber evidence="1">1.1.1.130</ecNumber>
    </recommendedName>
    <alternativeName>
        <fullName evidence="1">3-dehydro-L-gulonate 2-dehydrogenase</fullName>
    </alternativeName>
</protein>
<proteinExistence type="inferred from homology"/>
<accession>A7ZTC2</accession>
<dbReference type="EC" id="1.1.1.130" evidence="1"/>
<dbReference type="EMBL" id="CP000800">
    <property type="protein sequence ID" value="ABV18700.1"/>
    <property type="molecule type" value="Genomic_DNA"/>
</dbReference>
<dbReference type="SMR" id="A7ZTC2"/>
<dbReference type="KEGG" id="ecw:EcE24377A_4072"/>
<dbReference type="HOGENOM" id="CLU_040452_4_0_6"/>
<dbReference type="Proteomes" id="UP000001122">
    <property type="component" value="Chromosome"/>
</dbReference>
<dbReference type="GO" id="GO:0005737">
    <property type="term" value="C:cytoplasm"/>
    <property type="evidence" value="ECO:0007669"/>
    <property type="project" value="UniProtKB-SubCell"/>
</dbReference>
<dbReference type="GO" id="GO:0047559">
    <property type="term" value="F:3-dehydro-L-gulonate 2-dehydrogenase activity"/>
    <property type="evidence" value="ECO:0007669"/>
    <property type="project" value="UniProtKB-UniRule"/>
</dbReference>
<dbReference type="GO" id="GO:0070403">
    <property type="term" value="F:NAD+ binding"/>
    <property type="evidence" value="ECO:0007669"/>
    <property type="project" value="InterPro"/>
</dbReference>
<dbReference type="Gene3D" id="1.10.1530.10">
    <property type="match status" value="1"/>
</dbReference>
<dbReference type="Gene3D" id="3.30.1370.60">
    <property type="entry name" value="Hypothetical oxidoreductase yiak, domain 2"/>
    <property type="match status" value="1"/>
</dbReference>
<dbReference type="Gene3D" id="3.30.60.50">
    <property type="entry name" value="Hypothetical oxidoreductase yiak, domain 3"/>
    <property type="match status" value="1"/>
</dbReference>
<dbReference type="HAMAP" id="MF_00820">
    <property type="entry name" value="Diketo_gul_reduc"/>
    <property type="match status" value="1"/>
</dbReference>
<dbReference type="InterPro" id="IPR023689">
    <property type="entry name" value="Diketo_gul_Rdtase"/>
</dbReference>
<dbReference type="InterPro" id="IPR043144">
    <property type="entry name" value="Mal/L-sulf/L-lact_DH-like_ah"/>
</dbReference>
<dbReference type="InterPro" id="IPR043143">
    <property type="entry name" value="Mal/L-sulf/L-lact_DH-like_NADP"/>
</dbReference>
<dbReference type="InterPro" id="IPR036111">
    <property type="entry name" value="Mal/L-sulfo/L-lacto_DH-like_sf"/>
</dbReference>
<dbReference type="InterPro" id="IPR003767">
    <property type="entry name" value="Malate/L-lactate_DH-like"/>
</dbReference>
<dbReference type="NCBIfam" id="NF009750">
    <property type="entry name" value="PRK13260.1"/>
    <property type="match status" value="1"/>
</dbReference>
<dbReference type="PANTHER" id="PTHR11091:SF3">
    <property type="entry name" value="2,3-DIKETO-L-GULONATE REDUCTASE"/>
    <property type="match status" value="1"/>
</dbReference>
<dbReference type="PANTHER" id="PTHR11091">
    <property type="entry name" value="OXIDOREDUCTASE-RELATED"/>
    <property type="match status" value="1"/>
</dbReference>
<dbReference type="Pfam" id="PF02615">
    <property type="entry name" value="Ldh_2"/>
    <property type="match status" value="1"/>
</dbReference>
<dbReference type="SUPFAM" id="SSF89733">
    <property type="entry name" value="L-sulfolactate dehydrogenase-like"/>
    <property type="match status" value="1"/>
</dbReference>
<feature type="chain" id="PRO_1000062439" description="2,3-diketo-L-gulonate reductase">
    <location>
        <begin position="1"/>
        <end position="332"/>
    </location>
</feature>
<feature type="active site" description="Proton donor" evidence="1">
    <location>
        <position position="44"/>
    </location>
</feature>
<feature type="binding site" evidence="1">
    <location>
        <begin position="168"/>
        <end position="174"/>
    </location>
    <ligand>
        <name>NAD(+)</name>
        <dbReference type="ChEBI" id="CHEBI:57540"/>
    </ligand>
</feature>
<feature type="binding site" evidence="1">
    <location>
        <begin position="224"/>
        <end position="225"/>
    </location>
    <ligand>
        <name>NAD(+)</name>
        <dbReference type="ChEBI" id="CHEBI:57540"/>
    </ligand>
</feature>
<feature type="binding site" evidence="1">
    <location>
        <begin position="304"/>
        <end position="306"/>
    </location>
    <ligand>
        <name>NAD(+)</name>
        <dbReference type="ChEBI" id="CHEBI:57540"/>
    </ligand>
</feature>
<organism>
    <name type="scientific">Escherichia coli O139:H28 (strain E24377A / ETEC)</name>
    <dbReference type="NCBI Taxonomy" id="331111"/>
    <lineage>
        <taxon>Bacteria</taxon>
        <taxon>Pseudomonadati</taxon>
        <taxon>Pseudomonadota</taxon>
        <taxon>Gammaproteobacteria</taxon>
        <taxon>Enterobacterales</taxon>
        <taxon>Enterobacteriaceae</taxon>
        <taxon>Escherichia</taxon>
    </lineage>
</organism>
<evidence type="ECO:0000255" key="1">
    <source>
        <dbReference type="HAMAP-Rule" id="MF_00820"/>
    </source>
</evidence>
<sequence>MKVTFEQLKAAFNRVLISRGVDSETANACAEMFARTTESGVYSHGVNRFPRFIQQLENGDIIPDAQPKRITSLGAIEQWDAQRSIGNLTAKKMMDRAIELAADHGIGLVALRNANHWMRGGSYGWQAAEKGYIGICWTNSIAVMPPWGAKECRIGTNPLIVAIPSTPITMVDMSMSMFSYGMLEVNRLAGRQLPVDGGFDDEGNLTKEPGVIEKNRRILPMGYWKGSGMSIVLDMIATLLSDGASVAEVTQDNSDEYGISQIFIAIEVDKLIDGPTRDAKLQRIMDYVTTAERADENQAIRLPGHEFTTLLAENRRNGITVDDSVWAKIQAL</sequence>
<gene>
    <name evidence="1" type="primary">dlgD</name>
    <name type="ordered locus">EcE24377A_4072</name>
</gene>
<reference key="1">
    <citation type="journal article" date="2008" name="J. Bacteriol.">
        <title>The pangenome structure of Escherichia coli: comparative genomic analysis of E. coli commensal and pathogenic isolates.</title>
        <authorList>
            <person name="Rasko D.A."/>
            <person name="Rosovitz M.J."/>
            <person name="Myers G.S.A."/>
            <person name="Mongodin E.F."/>
            <person name="Fricke W.F."/>
            <person name="Gajer P."/>
            <person name="Crabtree J."/>
            <person name="Sebaihia M."/>
            <person name="Thomson N.R."/>
            <person name="Chaudhuri R."/>
            <person name="Henderson I.R."/>
            <person name="Sperandio V."/>
            <person name="Ravel J."/>
        </authorList>
    </citation>
    <scope>NUCLEOTIDE SEQUENCE [LARGE SCALE GENOMIC DNA]</scope>
    <source>
        <strain>E24377A / ETEC</strain>
    </source>
</reference>
<keyword id="KW-0963">Cytoplasm</keyword>
<keyword id="KW-0520">NAD</keyword>
<keyword id="KW-0560">Oxidoreductase</keyword>
<keyword id="KW-1185">Reference proteome</keyword>
<comment type="function">
    <text evidence="1">Catalyzes the reduction of 2,3-diketo-L-gulonate in the presence of NADH, to form 3-keto-L-gulonate.</text>
</comment>
<comment type="catalytic activity">
    <reaction evidence="1">
        <text>3-dehydro-L-gulonate + NAD(+) = 2,3-dioxo-L-gulonate + NADH + H(+)</text>
        <dbReference type="Rhea" id="RHEA:21924"/>
        <dbReference type="ChEBI" id="CHEBI:15378"/>
        <dbReference type="ChEBI" id="CHEBI:57441"/>
        <dbReference type="ChEBI" id="CHEBI:57540"/>
        <dbReference type="ChEBI" id="CHEBI:57655"/>
        <dbReference type="ChEBI" id="CHEBI:57945"/>
        <dbReference type="EC" id="1.1.1.130"/>
    </reaction>
</comment>
<comment type="catalytic activity">
    <reaction evidence="1">
        <text>3-dehydro-L-gulonate + NADP(+) = 2,3-dioxo-L-gulonate + NADPH + H(+)</text>
        <dbReference type="Rhea" id="RHEA:21928"/>
        <dbReference type="ChEBI" id="CHEBI:15378"/>
        <dbReference type="ChEBI" id="CHEBI:57441"/>
        <dbReference type="ChEBI" id="CHEBI:57655"/>
        <dbReference type="ChEBI" id="CHEBI:57783"/>
        <dbReference type="ChEBI" id="CHEBI:58349"/>
        <dbReference type="EC" id="1.1.1.130"/>
    </reaction>
</comment>
<comment type="subunit">
    <text evidence="1">Homodimer.</text>
</comment>
<comment type="subcellular location">
    <subcellularLocation>
        <location evidence="1">Cytoplasm</location>
    </subcellularLocation>
</comment>
<comment type="similarity">
    <text evidence="1">Belongs to the LDH2/MDH2 oxidoreductase family. DlgD subfamily.</text>
</comment>
<name>DLGD_ECO24</name>